<accession>Q47316</accession>
<gene>
    <name type="primary">iucA</name>
</gene>
<keyword id="KW-0067">ATP-binding</keyword>
<keyword id="KW-0436">Ligase</keyword>
<keyword id="KW-0547">Nucleotide-binding</keyword>
<keyword id="KW-0614">Plasmid</keyword>
<keyword id="KW-0808">Transferase</keyword>
<organism>
    <name type="scientific">Escherichia coli</name>
    <dbReference type="NCBI Taxonomy" id="562"/>
    <lineage>
        <taxon>Bacteria</taxon>
        <taxon>Pseudomonadati</taxon>
        <taxon>Pseudomonadota</taxon>
        <taxon>Gammaproteobacteria</taxon>
        <taxon>Enterobacterales</taxon>
        <taxon>Enterobacteriaceae</taxon>
        <taxon>Escherichia</taxon>
    </lineage>
</organism>
<sequence>MILPSEKSATDVAAQCFLNALIRETKDWQLAEYPPDELIIPLDEQKSLHFRVAYFSPTQHHRFAFPAHLVTASGSYPVDFTTLSRLIIDKLRHQLFLPVPLCETFHQRVLESYAHTQQTIDARHDWAILREKALNFGEAEQALLTGHAFHPAPKSHEPFNRQEAERYLPDMAPHFPLRWFSVDKTQIAGESLHLNLQQRLTRFAAENAPQLLNELSDNQWLFPLRPWQGEYLFQQVWCQALFAKGLIRDLGEAGTSWLPTTSSRSLYCATSRDMIKFSLSVRLTNSVRTLSVKEVERGMRLARLAQTDGWQMLQARFPTFRVMQEDDWTGLRDLNGNIMQESLFSPAWKTLLLEQPQSQTNVLVSLTQAGPHGGDSLLVSAVKRLSDRLGITVQQAAHAWVDAYCQQVLKPLFTAEADYGLVLLAHQQNILVQMLGDLPVGFIYRDCQGSAFMPHATEWLDTIDEAQAENIFTREQLLRYFPYYLLVNSTFAVTAALGAAGLDSEANLMARVRTLLAEVRDQVTHKTCLNYVLESPYWNVKGNFFCYLNDHNENTIVDPSVIYFDFANPLQAQEV</sequence>
<evidence type="ECO:0000269" key="1">
    <source>
    </source>
</evidence>
<evidence type="ECO:0000269" key="2">
    <source>
    </source>
</evidence>
<evidence type="ECO:0000305" key="3"/>
<geneLocation type="plasmid">
    <name>IncFI ColV3-K30</name>
</geneLocation>
<name>IUCA_ECOLX</name>
<proteinExistence type="evidence at protein level"/>
<dbReference type="EC" id="6.3.2.38"/>
<dbReference type="EMBL" id="X76100">
    <property type="protein sequence ID" value="CAA53707.1"/>
    <property type="molecule type" value="Genomic_DNA"/>
</dbReference>
<dbReference type="PIR" id="S44018">
    <property type="entry name" value="S44018"/>
</dbReference>
<dbReference type="SMR" id="Q47316"/>
<dbReference type="KEGG" id="ag:CAA53707"/>
<dbReference type="BioCyc" id="MetaCyc:MONOMER-11597"/>
<dbReference type="BRENDA" id="6.3.2.38">
    <property type="organism ID" value="2026"/>
</dbReference>
<dbReference type="UniPathway" id="UPA00014"/>
<dbReference type="GO" id="GO:0050565">
    <property type="term" value="F:aerobactin synthase activity"/>
    <property type="evidence" value="ECO:0000315"/>
    <property type="project" value="UniProtKB"/>
</dbReference>
<dbReference type="GO" id="GO:0005524">
    <property type="term" value="F:ATP binding"/>
    <property type="evidence" value="ECO:0007669"/>
    <property type="project" value="UniProtKB-KW"/>
</dbReference>
<dbReference type="GO" id="GO:0016740">
    <property type="term" value="F:transferase activity"/>
    <property type="evidence" value="ECO:0007669"/>
    <property type="project" value="UniProtKB-KW"/>
</dbReference>
<dbReference type="GO" id="GO:0019270">
    <property type="term" value="P:aerobactin biosynthetic process"/>
    <property type="evidence" value="ECO:0000315"/>
    <property type="project" value="UniProtKB"/>
</dbReference>
<dbReference type="GO" id="GO:0019290">
    <property type="term" value="P:siderophore biosynthetic process"/>
    <property type="evidence" value="ECO:0007669"/>
    <property type="project" value="InterPro"/>
</dbReference>
<dbReference type="FunFam" id="1.10.510.40:FF:000004">
    <property type="entry name" value="Aerobactin synthase IucA"/>
    <property type="match status" value="1"/>
</dbReference>
<dbReference type="Gene3D" id="1.10.510.40">
    <property type="match status" value="1"/>
</dbReference>
<dbReference type="InterPro" id="IPR007310">
    <property type="entry name" value="Aerobactin_biosyn_IucA/IucC_N"/>
</dbReference>
<dbReference type="InterPro" id="IPR022770">
    <property type="entry name" value="IucA/IucC-like_C"/>
</dbReference>
<dbReference type="InterPro" id="IPR037455">
    <property type="entry name" value="LucA/IucC-like"/>
</dbReference>
<dbReference type="PANTHER" id="PTHR34384">
    <property type="entry name" value="L-2,3-DIAMINOPROPANOATE--CITRATE LIGASE"/>
    <property type="match status" value="1"/>
</dbReference>
<dbReference type="PANTHER" id="PTHR34384:SF5">
    <property type="entry name" value="L-2,3-DIAMINOPROPANOATE--CITRATE LIGASE"/>
    <property type="match status" value="1"/>
</dbReference>
<dbReference type="Pfam" id="PF06276">
    <property type="entry name" value="FhuF"/>
    <property type="match status" value="1"/>
</dbReference>
<dbReference type="Pfam" id="PF04183">
    <property type="entry name" value="IucA_IucC"/>
    <property type="match status" value="1"/>
</dbReference>
<reference key="1">
    <citation type="journal article" date="1994" name="J. Mol. Biol.">
        <title>The organization of intercistronic regions of the aerobactin operon of pColV-K30 may account for the differential expression of the iucABCD iutA genes.</title>
        <authorList>
            <person name="Martinez J.L."/>
            <person name="Herrero M."/>
            <person name="de Lorenzo V."/>
        </authorList>
    </citation>
    <scope>NUCLEOTIDE SEQUENCE [GENOMIC DNA]</scope>
</reference>
<reference key="2">
    <citation type="journal article" date="1986" name="J. Bacteriol.">
        <title>Aerobactin biosynthesis and transport genes of plasmid ColV-K30 in Escherichia coli K-12.</title>
        <authorList>
            <person name="de Lorenzo V."/>
            <person name="Bindereif A."/>
            <person name="Paw B.H."/>
            <person name="Neilands J.B."/>
        </authorList>
    </citation>
    <scope>FUNCTION IN AEROBACTIN BIOSYNTHESIS</scope>
    <scope>NOMENCLATURE</scope>
</reference>
<reference key="3">
    <citation type="journal article" date="1986" name="J. Bacteriol.">
        <title>Characterization of iucA and iucC genes of the aerobactin system of plasmid ColV-K30 in Escherichia coli.</title>
        <authorList>
            <person name="de Lorenzo V."/>
            <person name="Neilands J.B."/>
        </authorList>
    </citation>
    <scope>FUNCTION IN AEROBACTIN BIOSYNTHESIS</scope>
    <scope>DISRUPTION PHENOTYPE</scope>
</reference>
<comment type="function">
    <text evidence="1 2">Catalyzes the attachment of a first N-acetyl-N-hydroxylysine to a carboxylic group of citric acid to yield N-citryl-N-acetyl-N-hydroxylysine. Involved in the biosynthesis of the siderophore aerobactin which is a chelator that mediates the high-affinity iron transport systems induced under iron-stressed conditions.</text>
</comment>
<comment type="catalytic activity">
    <reaction>
        <text>N(6)-acetyl-N(6)-hydroxy-L-lysine + citrate + ATP = N(2)-citryl-N(6)-acetyl-N(6)-hydroxy-L-lysine + AMP + diphosphate + H(+)</text>
        <dbReference type="Rhea" id="RHEA:32163"/>
        <dbReference type="ChEBI" id="CHEBI:15378"/>
        <dbReference type="ChEBI" id="CHEBI:16947"/>
        <dbReference type="ChEBI" id="CHEBI:30616"/>
        <dbReference type="ChEBI" id="CHEBI:33019"/>
        <dbReference type="ChEBI" id="CHEBI:58122"/>
        <dbReference type="ChEBI" id="CHEBI:63796"/>
        <dbReference type="ChEBI" id="CHEBI:456215"/>
        <dbReference type="EC" id="6.3.2.38"/>
    </reaction>
</comment>
<comment type="pathway">
    <text>Siderophore biosynthesis; aerobactin biosynthesis.</text>
</comment>
<comment type="disruption phenotype">
    <text evidence="2">Cells lacking this gene are not able to produce aerobactin and accumulate N-acetyl-N-hydroxylysine.</text>
</comment>
<comment type="similarity">
    <text evidence="3">Belongs to the IucA/IucC family.</text>
</comment>
<protein>
    <recommendedName>
        <fullName>N(2)-citryl-N(6)-acetyl-N(6)-hydroxylysine synthase</fullName>
        <ecNumber>6.3.2.38</ecNumber>
    </recommendedName>
    <alternativeName>
        <fullName>Aerobactin synthase IucA</fullName>
    </alternativeName>
</protein>
<feature type="chain" id="PRO_0000084274" description="N(2)-citryl-N(6)-acetyl-N(6)-hydroxylysine synthase">
    <location>
        <begin position="1"/>
        <end position="575"/>
    </location>
</feature>